<feature type="chain" id="PRO_0000293115" description="Cyclin-dependent kinase B2-1">
    <location>
        <begin position="1"/>
        <end position="313"/>
    </location>
</feature>
<feature type="domain" description="Protein kinase" evidence="3">
    <location>
        <begin position="14"/>
        <end position="304"/>
    </location>
</feature>
<feature type="active site" description="Proton acceptor" evidence="3 4">
    <location>
        <position position="145"/>
    </location>
</feature>
<feature type="binding site" evidence="3">
    <location>
        <begin position="20"/>
        <end position="28"/>
    </location>
    <ligand>
        <name>ATP</name>
        <dbReference type="ChEBI" id="CHEBI:30616"/>
    </ligand>
</feature>
<feature type="binding site" evidence="3">
    <location>
        <position position="43"/>
    </location>
    <ligand>
        <name>ATP</name>
        <dbReference type="ChEBI" id="CHEBI:30616"/>
    </ligand>
</feature>
<feature type="modified residue" description="N-acetylmethionine" evidence="9">
    <location>
        <position position="1"/>
    </location>
</feature>
<feature type="modified residue" description="Phosphotyrosine" evidence="1">
    <location>
        <position position="25"/>
    </location>
</feature>
<feature type="modified residue" description="Phosphothreonine" evidence="2">
    <location>
        <position position="179"/>
    </location>
</feature>
<feature type="sequence conflict" description="In Ref. 5; AAK63856/AAN28798." evidence="8" ref="5">
    <original>S</original>
    <variation>G</variation>
    <location>
        <position position="250"/>
    </location>
</feature>
<feature type="sequence conflict" description="In Ref. 5; AAK63856/AAN28798." evidence="8" ref="5">
    <original>S</original>
    <variation>F</variation>
    <location>
        <position position="267"/>
    </location>
</feature>
<accession>Q8LF80</accession>
<accession>Q94EX2</accession>
<accession>Q9C527</accession>
<gene>
    <name type="primary">CDKB2-1</name>
    <name type="ordered locus">At1g76540</name>
    <name type="ORF">F14G6.14</name>
</gene>
<keyword id="KW-0007">Acetylation</keyword>
<keyword id="KW-0067">ATP-binding</keyword>
<keyword id="KW-0418">Kinase</keyword>
<keyword id="KW-0547">Nucleotide-binding</keyword>
<keyword id="KW-0597">Phosphoprotein</keyword>
<keyword id="KW-1185">Reference proteome</keyword>
<keyword id="KW-0723">Serine/threonine-protein kinase</keyword>
<keyword id="KW-0808">Transferase</keyword>
<comment type="catalytic activity">
    <reaction>
        <text>L-seryl-[protein] + ATP = O-phospho-L-seryl-[protein] + ADP + H(+)</text>
        <dbReference type="Rhea" id="RHEA:17989"/>
        <dbReference type="Rhea" id="RHEA-COMP:9863"/>
        <dbReference type="Rhea" id="RHEA-COMP:11604"/>
        <dbReference type="ChEBI" id="CHEBI:15378"/>
        <dbReference type="ChEBI" id="CHEBI:29999"/>
        <dbReference type="ChEBI" id="CHEBI:30616"/>
        <dbReference type="ChEBI" id="CHEBI:83421"/>
        <dbReference type="ChEBI" id="CHEBI:456216"/>
        <dbReference type="EC" id="2.7.11.22"/>
    </reaction>
</comment>
<comment type="catalytic activity">
    <reaction>
        <text>L-threonyl-[protein] + ATP = O-phospho-L-threonyl-[protein] + ADP + H(+)</text>
        <dbReference type="Rhea" id="RHEA:46608"/>
        <dbReference type="Rhea" id="RHEA-COMP:11060"/>
        <dbReference type="Rhea" id="RHEA-COMP:11605"/>
        <dbReference type="ChEBI" id="CHEBI:15378"/>
        <dbReference type="ChEBI" id="CHEBI:30013"/>
        <dbReference type="ChEBI" id="CHEBI:30616"/>
        <dbReference type="ChEBI" id="CHEBI:61977"/>
        <dbReference type="ChEBI" id="CHEBI:456216"/>
        <dbReference type="EC" id="2.7.11.22"/>
    </reaction>
</comment>
<comment type="catalytic activity">
    <reaction>
        <text>[DNA-directed RNA polymerase] + ATP = phospho-[DNA-directed RNA polymerase] + ADP + H(+)</text>
        <dbReference type="Rhea" id="RHEA:10216"/>
        <dbReference type="Rhea" id="RHEA-COMP:11321"/>
        <dbReference type="Rhea" id="RHEA-COMP:11322"/>
        <dbReference type="ChEBI" id="CHEBI:15378"/>
        <dbReference type="ChEBI" id="CHEBI:30616"/>
        <dbReference type="ChEBI" id="CHEBI:43176"/>
        <dbReference type="ChEBI" id="CHEBI:68546"/>
        <dbReference type="ChEBI" id="CHEBI:456216"/>
        <dbReference type="EC" id="2.7.11.23"/>
    </reaction>
</comment>
<comment type="subunit">
    <text evidence="5 6">Interacts with CYCD4-1 and CKS1.</text>
</comment>
<comment type="interaction">
    <interactant intactId="EBI-1253579">
        <id>Q8LF80</id>
    </interactant>
    <interactant intactId="EBI-1253127">
        <id>O23249</id>
        <label>CKS1</label>
    </interactant>
    <organismsDiffer>false</organismsDiffer>
    <experiments>5</experiments>
</comment>
<comment type="interaction">
    <interactant intactId="EBI-1253579">
        <id>Q8LF80</id>
    </interactant>
    <interactant intactId="EBI-2025690">
        <id>P42751</id>
        <label>CYCD1-1</label>
    </interactant>
    <organismsDiffer>false</organismsDiffer>
    <experiments>2</experiments>
</comment>
<comment type="interaction">
    <interactant intactId="EBI-1253579">
        <id>Q8LF80</id>
    </interactant>
    <interactant intactId="EBI-1253202">
        <id>Q8LGA1</id>
        <label>CYCD4-1</label>
    </interactant>
    <organismsDiffer>false</organismsDiffer>
    <experiments>4</experiments>
</comment>
<comment type="tissue specificity">
    <text evidence="5 6 7">Expressed in root tips, shoot apical meristem, leaf primordia vascular tissues and tapetum of anthers.</text>
</comment>
<comment type="developmental stage">
    <text evidence="6">Expressed from early G2 phase and increases to reach a peak at mitosis.</text>
</comment>
<comment type="miscellaneous">
    <text>Protein abundance may be regulated through proteasome-mediated protein degradation.</text>
</comment>
<comment type="similarity">
    <text evidence="8">Belongs to the protein kinase superfamily. CMGC Ser/Thr protein kinase family. CDC2/CDKX subfamily.</text>
</comment>
<comment type="sequence caution" evidence="8">
    <conflict type="erroneous initiation">
        <sequence resource="EMBL-CDS" id="AAM61558"/>
    </conflict>
</comment>
<name>CKB21_ARATH</name>
<evidence type="ECO:0000250" key="1">
    <source>
        <dbReference type="UniProtKB" id="P24100"/>
    </source>
</evidence>
<evidence type="ECO:0000250" key="2">
    <source>
        <dbReference type="UniProtKB" id="Q9C9M7"/>
    </source>
</evidence>
<evidence type="ECO:0000255" key="3">
    <source>
        <dbReference type="PROSITE-ProRule" id="PRU00159"/>
    </source>
</evidence>
<evidence type="ECO:0000255" key="4">
    <source>
        <dbReference type="PROSITE-ProRule" id="PRU10027"/>
    </source>
</evidence>
<evidence type="ECO:0000269" key="5">
    <source>
    </source>
</evidence>
<evidence type="ECO:0000269" key="6">
    <source>
    </source>
</evidence>
<evidence type="ECO:0000269" key="7">
    <source>
    </source>
</evidence>
<evidence type="ECO:0000305" key="8"/>
<evidence type="ECO:0007744" key="9">
    <source>
    </source>
</evidence>
<protein>
    <recommendedName>
        <fullName>Cyclin-dependent kinase B2-1</fullName>
        <shortName>CDKB2;1</shortName>
        <ecNumber>2.7.11.22</ecNumber>
        <ecNumber>2.7.11.23</ecNumber>
    </recommendedName>
</protein>
<reference key="1">
    <citation type="journal article" date="2001" name="J. Exp. Bot.">
        <title>Identification of novel cyclin-dependent kinases interacting with the CKS1 protein of Arabidopsis.</title>
        <authorList>
            <person name="Boudolf V."/>
            <person name="Rombauts S."/>
            <person name="Naudts M."/>
            <person name="Inze D."/>
            <person name="de Veylder L."/>
        </authorList>
    </citation>
    <scope>NUCLEOTIDE SEQUENCE [MRNA]</scope>
    <scope>TISSUE SPECIFICITY</scope>
    <scope>INTERACTION WITH CKS1</scope>
</reference>
<reference key="2">
    <citation type="journal article" date="2003" name="Plant Physiol.">
        <title>Arabidopsis D-type cyclin CYCD4;1 is a novel cyclin partner of B2-type cyclin-dependent kinase.</title>
        <authorList>
            <person name="Kono A."/>
            <person name="Umeda-Hara C."/>
            <person name="Lee J."/>
            <person name="Ito M."/>
            <person name="Uchimiya H."/>
            <person name="Umeda M."/>
        </authorList>
    </citation>
    <scope>NUCLEOTIDE SEQUENCE [MRNA]</scope>
    <scope>TISSUE SPECIFICITY</scope>
    <scope>DEVELOPMENTAL STAGE</scope>
    <scope>INTERACTION WITH CYCD4-1</scope>
</reference>
<reference key="3">
    <citation type="journal article" date="2000" name="Nature">
        <title>Sequence and analysis of chromosome 1 of the plant Arabidopsis thaliana.</title>
        <authorList>
            <person name="Theologis A."/>
            <person name="Ecker J.R."/>
            <person name="Palm C.J."/>
            <person name="Federspiel N.A."/>
            <person name="Kaul S."/>
            <person name="White O."/>
            <person name="Alonso J."/>
            <person name="Altafi H."/>
            <person name="Araujo R."/>
            <person name="Bowman C.L."/>
            <person name="Brooks S.Y."/>
            <person name="Buehler E."/>
            <person name="Chan A."/>
            <person name="Chao Q."/>
            <person name="Chen H."/>
            <person name="Cheuk R.F."/>
            <person name="Chin C.W."/>
            <person name="Chung M.K."/>
            <person name="Conn L."/>
            <person name="Conway A.B."/>
            <person name="Conway A.R."/>
            <person name="Creasy T.H."/>
            <person name="Dewar K."/>
            <person name="Dunn P."/>
            <person name="Etgu P."/>
            <person name="Feldblyum T.V."/>
            <person name="Feng J.-D."/>
            <person name="Fong B."/>
            <person name="Fujii C.Y."/>
            <person name="Gill J.E."/>
            <person name="Goldsmith A.D."/>
            <person name="Haas B."/>
            <person name="Hansen N.F."/>
            <person name="Hughes B."/>
            <person name="Huizar L."/>
            <person name="Hunter J.L."/>
            <person name="Jenkins J."/>
            <person name="Johnson-Hopson C."/>
            <person name="Khan S."/>
            <person name="Khaykin E."/>
            <person name="Kim C.J."/>
            <person name="Koo H.L."/>
            <person name="Kremenetskaia I."/>
            <person name="Kurtz D.B."/>
            <person name="Kwan A."/>
            <person name="Lam B."/>
            <person name="Langin-Hooper S."/>
            <person name="Lee A."/>
            <person name="Lee J.M."/>
            <person name="Lenz C.A."/>
            <person name="Li J.H."/>
            <person name="Li Y.-P."/>
            <person name="Lin X."/>
            <person name="Liu S.X."/>
            <person name="Liu Z.A."/>
            <person name="Luros J.S."/>
            <person name="Maiti R."/>
            <person name="Marziali A."/>
            <person name="Militscher J."/>
            <person name="Miranda M."/>
            <person name="Nguyen M."/>
            <person name="Nierman W.C."/>
            <person name="Osborne B.I."/>
            <person name="Pai G."/>
            <person name="Peterson J."/>
            <person name="Pham P.K."/>
            <person name="Rizzo M."/>
            <person name="Rooney T."/>
            <person name="Rowley D."/>
            <person name="Sakano H."/>
            <person name="Salzberg S.L."/>
            <person name="Schwartz J.R."/>
            <person name="Shinn P."/>
            <person name="Southwick A.M."/>
            <person name="Sun H."/>
            <person name="Tallon L.J."/>
            <person name="Tambunga G."/>
            <person name="Toriumi M.J."/>
            <person name="Town C.D."/>
            <person name="Utterback T."/>
            <person name="Van Aken S."/>
            <person name="Vaysberg M."/>
            <person name="Vysotskaia V.S."/>
            <person name="Walker M."/>
            <person name="Wu D."/>
            <person name="Yu G."/>
            <person name="Fraser C.M."/>
            <person name="Venter J.C."/>
            <person name="Davis R.W."/>
        </authorList>
    </citation>
    <scope>NUCLEOTIDE SEQUENCE [LARGE SCALE GENOMIC DNA]</scope>
    <source>
        <strain>cv. Columbia</strain>
    </source>
</reference>
<reference key="4">
    <citation type="journal article" date="2017" name="Plant J.">
        <title>Araport11: a complete reannotation of the Arabidopsis thaliana reference genome.</title>
        <authorList>
            <person name="Cheng C.Y."/>
            <person name="Krishnakumar V."/>
            <person name="Chan A.P."/>
            <person name="Thibaud-Nissen F."/>
            <person name="Schobel S."/>
            <person name="Town C.D."/>
        </authorList>
    </citation>
    <scope>GENOME REANNOTATION</scope>
    <source>
        <strain>cv. Columbia</strain>
    </source>
</reference>
<reference key="5">
    <citation type="journal article" date="2003" name="Science">
        <title>Empirical analysis of transcriptional activity in the Arabidopsis genome.</title>
        <authorList>
            <person name="Yamada K."/>
            <person name="Lim J."/>
            <person name="Dale J.M."/>
            <person name="Chen H."/>
            <person name="Shinn P."/>
            <person name="Palm C.J."/>
            <person name="Southwick A.M."/>
            <person name="Wu H.C."/>
            <person name="Kim C.J."/>
            <person name="Nguyen M."/>
            <person name="Pham P.K."/>
            <person name="Cheuk R.F."/>
            <person name="Karlin-Newmann G."/>
            <person name="Liu S.X."/>
            <person name="Lam B."/>
            <person name="Sakano H."/>
            <person name="Wu T."/>
            <person name="Yu G."/>
            <person name="Miranda M."/>
            <person name="Quach H.L."/>
            <person name="Tripp M."/>
            <person name="Chang C.H."/>
            <person name="Lee J.M."/>
            <person name="Toriumi M.J."/>
            <person name="Chan M.M."/>
            <person name="Tang C.C."/>
            <person name="Onodera C.S."/>
            <person name="Deng J.M."/>
            <person name="Akiyama K."/>
            <person name="Ansari Y."/>
            <person name="Arakawa T."/>
            <person name="Banh J."/>
            <person name="Banno F."/>
            <person name="Bowser L."/>
            <person name="Brooks S.Y."/>
            <person name="Carninci P."/>
            <person name="Chao Q."/>
            <person name="Choy N."/>
            <person name="Enju A."/>
            <person name="Goldsmith A.D."/>
            <person name="Gurjal M."/>
            <person name="Hansen N.F."/>
            <person name="Hayashizaki Y."/>
            <person name="Johnson-Hopson C."/>
            <person name="Hsuan V.W."/>
            <person name="Iida K."/>
            <person name="Karnes M."/>
            <person name="Khan S."/>
            <person name="Koesema E."/>
            <person name="Ishida J."/>
            <person name="Jiang P.X."/>
            <person name="Jones T."/>
            <person name="Kawai J."/>
            <person name="Kamiya A."/>
            <person name="Meyers C."/>
            <person name="Nakajima M."/>
            <person name="Narusaka M."/>
            <person name="Seki M."/>
            <person name="Sakurai T."/>
            <person name="Satou M."/>
            <person name="Tamse R."/>
            <person name="Vaysberg M."/>
            <person name="Wallender E.K."/>
            <person name="Wong C."/>
            <person name="Yamamura Y."/>
            <person name="Yuan S."/>
            <person name="Shinozaki K."/>
            <person name="Davis R.W."/>
            <person name="Theologis A."/>
            <person name="Ecker J.R."/>
        </authorList>
    </citation>
    <scope>NUCLEOTIDE SEQUENCE [LARGE SCALE MRNA]</scope>
    <source>
        <strain>cv. Columbia</strain>
    </source>
</reference>
<reference key="6">
    <citation type="submission" date="2002-03" db="EMBL/GenBank/DDBJ databases">
        <title>Full-length cDNA from Arabidopsis thaliana.</title>
        <authorList>
            <person name="Brover V.V."/>
            <person name="Troukhan M.E."/>
            <person name="Alexandrov N.A."/>
            <person name="Lu Y.-P."/>
            <person name="Flavell R.B."/>
            <person name="Feldmann K.A."/>
        </authorList>
    </citation>
    <scope>NUCLEOTIDE SEQUENCE [LARGE SCALE MRNA]</scope>
</reference>
<reference key="7">
    <citation type="journal article" date="2002" name="Plant Cell">
        <title>Genome-wide analysis of core cell cycle genes in Arabidopsis.</title>
        <authorList>
            <person name="Vandepoele K."/>
            <person name="Raes J."/>
            <person name="de Veylder L."/>
            <person name="Rouze P."/>
            <person name="Rombauts S."/>
            <person name="Inze D."/>
        </authorList>
    </citation>
    <scope>GENE FAMILY</scope>
    <scope>NOMENCLATURE</scope>
</reference>
<reference key="8">
    <citation type="journal article" date="2006" name="Annu. Rev. Genet.">
        <title>Cell cycle regulation in plant development.</title>
        <authorList>
            <person name="Inze D."/>
            <person name="de Veylder L."/>
        </authorList>
    </citation>
    <scope>REVIEW</scope>
</reference>
<reference key="9">
    <citation type="journal article" date="2006" name="Plant Cell Physiol.">
        <title>Expression of B2-type cyclin-dependent kinase is controlled by protein degradation in Arabidopsis thaliana.</title>
        <authorList>
            <person name="Adachi S."/>
            <person name="Uchimiya H."/>
            <person name="Umeda M."/>
        </authorList>
    </citation>
    <scope>TISSUE SPECIFICITY</scope>
</reference>
<reference key="10">
    <citation type="journal article" date="2012" name="Mol. Cell. Proteomics">
        <title>Comparative large-scale characterisation of plant vs. mammal proteins reveals similar and idiosyncratic N-alpha acetylation features.</title>
        <authorList>
            <person name="Bienvenut W.V."/>
            <person name="Sumpton D."/>
            <person name="Martinez A."/>
            <person name="Lilla S."/>
            <person name="Espagne C."/>
            <person name="Meinnel T."/>
            <person name="Giglione C."/>
        </authorList>
    </citation>
    <scope>ACETYLATION [LARGE SCALE ANALYSIS] AT MET-1</scope>
    <scope>IDENTIFICATION BY MASS SPECTROMETRY [LARGE SCALE ANALYSIS]</scope>
</reference>
<proteinExistence type="evidence at protein level"/>
<dbReference type="EC" id="2.7.11.22"/>
<dbReference type="EC" id="2.7.11.23"/>
<dbReference type="EMBL" id="AJ297936">
    <property type="protein sequence ID" value="CAC34052.1"/>
    <property type="molecule type" value="mRNA"/>
</dbReference>
<dbReference type="EMBL" id="AB047279">
    <property type="protein sequence ID" value="BAB62068.1"/>
    <property type="molecule type" value="mRNA"/>
</dbReference>
<dbReference type="EMBL" id="AC015450">
    <property type="protein sequence ID" value="AAG51960.1"/>
    <property type="molecule type" value="Genomic_DNA"/>
</dbReference>
<dbReference type="EMBL" id="CP002684">
    <property type="protein sequence ID" value="AEE35857.1"/>
    <property type="molecule type" value="Genomic_DNA"/>
</dbReference>
<dbReference type="EMBL" id="AF389283">
    <property type="protein sequence ID" value="AAK63856.1"/>
    <property type="molecule type" value="mRNA"/>
</dbReference>
<dbReference type="EMBL" id="AY143859">
    <property type="protein sequence ID" value="AAN28798.1"/>
    <property type="molecule type" value="mRNA"/>
</dbReference>
<dbReference type="EMBL" id="AY085000">
    <property type="protein sequence ID" value="AAM61558.1"/>
    <property type="status" value="ALT_INIT"/>
    <property type="molecule type" value="mRNA"/>
</dbReference>
<dbReference type="PIR" id="D96793">
    <property type="entry name" value="D96793"/>
</dbReference>
<dbReference type="SMR" id="Q8LF80"/>
<dbReference type="BioGRID" id="29206">
    <property type="interactions" value="40"/>
</dbReference>
<dbReference type="FunCoup" id="Q8LF80">
    <property type="interactions" value="511"/>
</dbReference>
<dbReference type="IntAct" id="Q8LF80">
    <property type="interactions" value="14"/>
</dbReference>
<dbReference type="STRING" id="3702.Q8LF80"/>
<dbReference type="iPTMnet" id="Q8LF80"/>
<dbReference type="PaxDb" id="3702-AT1G76540.1"/>
<dbReference type="ProteomicsDB" id="246702"/>
<dbReference type="EnsemblPlants" id="AT1G76540.1">
    <property type="protein sequence ID" value="AT1G76540.1"/>
    <property type="gene ID" value="AT1G76540"/>
</dbReference>
<dbReference type="GeneID" id="843987"/>
<dbReference type="Gramene" id="AT1G76540.1">
    <property type="protein sequence ID" value="AT1G76540.1"/>
    <property type="gene ID" value="AT1G76540"/>
</dbReference>
<dbReference type="KEGG" id="ath:AT1G76540"/>
<dbReference type="Araport" id="AT1G76540"/>
<dbReference type="TAIR" id="AT1G76540">
    <property type="gene designation" value="CDKB2"/>
</dbReference>
<dbReference type="eggNOG" id="KOG0594">
    <property type="taxonomic scope" value="Eukaryota"/>
</dbReference>
<dbReference type="HOGENOM" id="CLU_000288_181_6_1"/>
<dbReference type="InParanoid" id="Q8LF80"/>
<dbReference type="OMA" id="NWHEFPQ"/>
<dbReference type="PhylomeDB" id="Q8LF80"/>
<dbReference type="PRO" id="PR:Q8LF80"/>
<dbReference type="Proteomes" id="UP000006548">
    <property type="component" value="Chromosome 1"/>
</dbReference>
<dbReference type="ExpressionAtlas" id="Q8LF80">
    <property type="expression patterns" value="baseline and differential"/>
</dbReference>
<dbReference type="GO" id="GO:0000307">
    <property type="term" value="C:cyclin-dependent protein kinase holoenzyme complex"/>
    <property type="evidence" value="ECO:0000314"/>
    <property type="project" value="TAIR"/>
</dbReference>
<dbReference type="GO" id="GO:0005524">
    <property type="term" value="F:ATP binding"/>
    <property type="evidence" value="ECO:0007669"/>
    <property type="project" value="UniProtKB-KW"/>
</dbReference>
<dbReference type="GO" id="GO:0004693">
    <property type="term" value="F:cyclin-dependent protein serine/threonine kinase activity"/>
    <property type="evidence" value="ECO:0000314"/>
    <property type="project" value="TAIR"/>
</dbReference>
<dbReference type="GO" id="GO:0106310">
    <property type="term" value="F:protein serine kinase activity"/>
    <property type="evidence" value="ECO:0007669"/>
    <property type="project" value="RHEA"/>
</dbReference>
<dbReference type="GO" id="GO:0008353">
    <property type="term" value="F:RNA polymerase II CTD heptapeptide repeat kinase activity"/>
    <property type="evidence" value="ECO:0007669"/>
    <property type="project" value="UniProtKB-EC"/>
</dbReference>
<dbReference type="GO" id="GO:0000086">
    <property type="term" value="P:G2/M transition of mitotic cell cycle"/>
    <property type="evidence" value="ECO:0000304"/>
    <property type="project" value="TAIR"/>
</dbReference>
<dbReference type="GO" id="GO:0009755">
    <property type="term" value="P:hormone-mediated signaling pathway"/>
    <property type="evidence" value="ECO:0000315"/>
    <property type="project" value="TAIR"/>
</dbReference>
<dbReference type="GO" id="GO:0010389">
    <property type="term" value="P:regulation of G2/M transition of mitotic cell cycle"/>
    <property type="evidence" value="ECO:0000315"/>
    <property type="project" value="TAIR"/>
</dbReference>
<dbReference type="GO" id="GO:0009934">
    <property type="term" value="P:regulation of meristem structural organization"/>
    <property type="evidence" value="ECO:0000315"/>
    <property type="project" value="TAIR"/>
</dbReference>
<dbReference type="FunFam" id="1.10.510.10:FF:000281">
    <property type="entry name" value="Cyclin-dependent kinase 2"/>
    <property type="match status" value="1"/>
</dbReference>
<dbReference type="FunFam" id="3.30.200.20:FF:000231">
    <property type="entry name" value="Cyclin-dependent kinase B2,2"/>
    <property type="match status" value="1"/>
</dbReference>
<dbReference type="Gene3D" id="3.30.200.20">
    <property type="entry name" value="Phosphorylase Kinase, domain 1"/>
    <property type="match status" value="1"/>
</dbReference>
<dbReference type="Gene3D" id="1.10.510.10">
    <property type="entry name" value="Transferase(Phosphotransferase) domain 1"/>
    <property type="match status" value="1"/>
</dbReference>
<dbReference type="InterPro" id="IPR050108">
    <property type="entry name" value="CDK"/>
</dbReference>
<dbReference type="InterPro" id="IPR011009">
    <property type="entry name" value="Kinase-like_dom_sf"/>
</dbReference>
<dbReference type="InterPro" id="IPR000719">
    <property type="entry name" value="Prot_kinase_dom"/>
</dbReference>
<dbReference type="InterPro" id="IPR017441">
    <property type="entry name" value="Protein_kinase_ATP_BS"/>
</dbReference>
<dbReference type="InterPro" id="IPR008271">
    <property type="entry name" value="Ser/Thr_kinase_AS"/>
</dbReference>
<dbReference type="PANTHER" id="PTHR24056">
    <property type="entry name" value="CELL DIVISION PROTEIN KINASE"/>
    <property type="match status" value="1"/>
</dbReference>
<dbReference type="PANTHER" id="PTHR24056:SF410">
    <property type="entry name" value="CYCLIN-DEPENDENT KINASE B2-1"/>
    <property type="match status" value="1"/>
</dbReference>
<dbReference type="Pfam" id="PF00069">
    <property type="entry name" value="Pkinase"/>
    <property type="match status" value="1"/>
</dbReference>
<dbReference type="SMART" id="SM00220">
    <property type="entry name" value="S_TKc"/>
    <property type="match status" value="1"/>
</dbReference>
<dbReference type="SUPFAM" id="SSF56112">
    <property type="entry name" value="Protein kinase-like (PK-like)"/>
    <property type="match status" value="1"/>
</dbReference>
<dbReference type="PROSITE" id="PS00107">
    <property type="entry name" value="PROTEIN_KINASE_ATP"/>
    <property type="match status" value="1"/>
</dbReference>
<dbReference type="PROSITE" id="PS50011">
    <property type="entry name" value="PROTEIN_KINASE_DOM"/>
    <property type="match status" value="1"/>
</dbReference>
<dbReference type="PROSITE" id="PS00108">
    <property type="entry name" value="PROTEIN_KINASE_ST"/>
    <property type="match status" value="1"/>
</dbReference>
<sequence length="313" mass="35593">MDEGVIAVSAMDAFEKLEKVGEGTYGKVYRAREKATGKIVALKKTRLHEDEEGVPSTTLREISILRMLARDPHVVRLMDVKQGLSKEGKTVLYLVFEYMDTDVKKFIRSFRSTGKNIPTQTIKSLMYQLCKGMAFCHGHGILHRDLKPHNLLMDPKTMRLKIADLGLARAFTLPMKKYTHEILTLWYRAPEVLLGATHYSTAVDMWSVGCIFAELVTNQAIFQGDSELQQLLHIFKLFGTPNEEMWPGVSTLKNWHEYPQWKPSTLSSAVPNLDEAGVDLLSKMLQYEPAKRISAKMAMEHPYFDDLPEKSSL</sequence>
<organism>
    <name type="scientific">Arabidopsis thaliana</name>
    <name type="common">Mouse-ear cress</name>
    <dbReference type="NCBI Taxonomy" id="3702"/>
    <lineage>
        <taxon>Eukaryota</taxon>
        <taxon>Viridiplantae</taxon>
        <taxon>Streptophyta</taxon>
        <taxon>Embryophyta</taxon>
        <taxon>Tracheophyta</taxon>
        <taxon>Spermatophyta</taxon>
        <taxon>Magnoliopsida</taxon>
        <taxon>eudicotyledons</taxon>
        <taxon>Gunneridae</taxon>
        <taxon>Pentapetalae</taxon>
        <taxon>rosids</taxon>
        <taxon>malvids</taxon>
        <taxon>Brassicales</taxon>
        <taxon>Brassicaceae</taxon>
        <taxon>Camelineae</taxon>
        <taxon>Arabidopsis</taxon>
    </lineage>
</organism>